<name>RL24_LACPL</name>
<evidence type="ECO:0000255" key="1">
    <source>
        <dbReference type="HAMAP-Rule" id="MF_01326"/>
    </source>
</evidence>
<evidence type="ECO:0000256" key="2">
    <source>
        <dbReference type="SAM" id="MobiDB-lite"/>
    </source>
</evidence>
<evidence type="ECO:0000305" key="3"/>
<organism>
    <name type="scientific">Lactiplantibacillus plantarum (strain ATCC BAA-793 / NCIMB 8826 / WCFS1)</name>
    <name type="common">Lactobacillus plantarum</name>
    <dbReference type="NCBI Taxonomy" id="220668"/>
    <lineage>
        <taxon>Bacteria</taxon>
        <taxon>Bacillati</taxon>
        <taxon>Bacillota</taxon>
        <taxon>Bacilli</taxon>
        <taxon>Lactobacillales</taxon>
        <taxon>Lactobacillaceae</taxon>
        <taxon>Lactiplantibacillus</taxon>
    </lineage>
</organism>
<comment type="function">
    <text evidence="1">One of two assembly initiator proteins, it binds directly to the 5'-end of the 23S rRNA, where it nucleates assembly of the 50S subunit.</text>
</comment>
<comment type="function">
    <text evidence="1">One of the proteins that surrounds the polypeptide exit tunnel on the outside of the subunit.</text>
</comment>
<comment type="subunit">
    <text evidence="1">Part of the 50S ribosomal subunit.</text>
</comment>
<comment type="similarity">
    <text evidence="1">Belongs to the universal ribosomal protein uL24 family.</text>
</comment>
<sequence>MLIKTGDKVRVISGKDRGQEGTVKKVISAKNRIVVEGVNKIKKHQKPTNVNPQGGIVDIEAPIDASNVMYLDPSTNEPTRLGVRREDGKRVRYAKKSGKDLEN</sequence>
<proteinExistence type="inferred from homology"/>
<gene>
    <name evidence="1" type="primary">rplX</name>
    <name type="ordered locus">lp_1046</name>
</gene>
<keyword id="KW-1185">Reference proteome</keyword>
<keyword id="KW-0687">Ribonucleoprotein</keyword>
<keyword id="KW-0689">Ribosomal protein</keyword>
<keyword id="KW-0694">RNA-binding</keyword>
<keyword id="KW-0699">rRNA-binding</keyword>
<feature type="chain" id="PRO_0000130668" description="Large ribosomal subunit protein uL24">
    <location>
        <begin position="1"/>
        <end position="103"/>
    </location>
</feature>
<feature type="region of interest" description="Disordered" evidence="2">
    <location>
        <begin position="70"/>
        <end position="103"/>
    </location>
</feature>
<reference key="1">
    <citation type="journal article" date="2003" name="Proc. Natl. Acad. Sci. U.S.A.">
        <title>Complete genome sequence of Lactobacillus plantarum WCFS1.</title>
        <authorList>
            <person name="Kleerebezem M."/>
            <person name="Boekhorst J."/>
            <person name="van Kranenburg R."/>
            <person name="Molenaar D."/>
            <person name="Kuipers O.P."/>
            <person name="Leer R."/>
            <person name="Tarchini R."/>
            <person name="Peters S.A."/>
            <person name="Sandbrink H.M."/>
            <person name="Fiers M.W.E.J."/>
            <person name="Stiekema W."/>
            <person name="Klein Lankhorst R.M."/>
            <person name="Bron P.A."/>
            <person name="Hoffer S.M."/>
            <person name="Nierop Groot M.N."/>
            <person name="Kerkhoven R."/>
            <person name="De Vries M."/>
            <person name="Ursing B."/>
            <person name="De Vos W.M."/>
            <person name="Siezen R.J."/>
        </authorList>
    </citation>
    <scope>NUCLEOTIDE SEQUENCE [LARGE SCALE GENOMIC DNA]</scope>
    <source>
        <strain>ATCC BAA-793 / NCIMB 8826 / WCFS1</strain>
    </source>
</reference>
<reference key="2">
    <citation type="journal article" date="2012" name="J. Bacteriol.">
        <title>Complete resequencing and reannotation of the Lactobacillus plantarum WCFS1 genome.</title>
        <authorList>
            <person name="Siezen R.J."/>
            <person name="Francke C."/>
            <person name="Renckens B."/>
            <person name="Boekhorst J."/>
            <person name="Wels M."/>
            <person name="Kleerebezem M."/>
            <person name="van Hijum S.A."/>
        </authorList>
    </citation>
    <scope>NUCLEOTIDE SEQUENCE [LARGE SCALE GENOMIC DNA]</scope>
    <scope>GENOME REANNOTATION</scope>
    <source>
        <strain>ATCC BAA-793 / NCIMB 8826 / WCFS1</strain>
    </source>
</reference>
<dbReference type="EMBL" id="AL935263">
    <property type="protein sequence ID" value="CCC78455.1"/>
    <property type="molecule type" value="Genomic_DNA"/>
</dbReference>
<dbReference type="RefSeq" id="WP_003641258.1">
    <property type="nucleotide sequence ID" value="NC_004567.2"/>
</dbReference>
<dbReference type="RefSeq" id="YP_004888969.1">
    <property type="nucleotide sequence ID" value="NC_004567.2"/>
</dbReference>
<dbReference type="SMR" id="Q88XX5"/>
<dbReference type="STRING" id="220668.lp_1046"/>
<dbReference type="EnsemblBacteria" id="CCC78455">
    <property type="protein sequence ID" value="CCC78455"/>
    <property type="gene ID" value="lp_1046"/>
</dbReference>
<dbReference type="GeneID" id="89668558"/>
<dbReference type="KEGG" id="lpl:lp_1046"/>
<dbReference type="PATRIC" id="fig|220668.9.peg.882"/>
<dbReference type="eggNOG" id="COG0198">
    <property type="taxonomic scope" value="Bacteria"/>
</dbReference>
<dbReference type="HOGENOM" id="CLU_093315_2_2_9"/>
<dbReference type="OrthoDB" id="9807419at2"/>
<dbReference type="PhylomeDB" id="Q88XX5"/>
<dbReference type="Proteomes" id="UP000000432">
    <property type="component" value="Chromosome"/>
</dbReference>
<dbReference type="GO" id="GO:1990904">
    <property type="term" value="C:ribonucleoprotein complex"/>
    <property type="evidence" value="ECO:0007669"/>
    <property type="project" value="UniProtKB-KW"/>
</dbReference>
<dbReference type="GO" id="GO:0005840">
    <property type="term" value="C:ribosome"/>
    <property type="evidence" value="ECO:0007669"/>
    <property type="project" value="UniProtKB-KW"/>
</dbReference>
<dbReference type="GO" id="GO:0019843">
    <property type="term" value="F:rRNA binding"/>
    <property type="evidence" value="ECO:0007669"/>
    <property type="project" value="UniProtKB-UniRule"/>
</dbReference>
<dbReference type="GO" id="GO:0003735">
    <property type="term" value="F:structural constituent of ribosome"/>
    <property type="evidence" value="ECO:0007669"/>
    <property type="project" value="InterPro"/>
</dbReference>
<dbReference type="GO" id="GO:0006412">
    <property type="term" value="P:translation"/>
    <property type="evidence" value="ECO:0007669"/>
    <property type="project" value="UniProtKB-UniRule"/>
</dbReference>
<dbReference type="CDD" id="cd06089">
    <property type="entry name" value="KOW_RPL26"/>
    <property type="match status" value="1"/>
</dbReference>
<dbReference type="FunFam" id="2.30.30.30:FF:000004">
    <property type="entry name" value="50S ribosomal protein L24"/>
    <property type="match status" value="1"/>
</dbReference>
<dbReference type="Gene3D" id="2.30.30.30">
    <property type="match status" value="1"/>
</dbReference>
<dbReference type="HAMAP" id="MF_01326_B">
    <property type="entry name" value="Ribosomal_uL24_B"/>
    <property type="match status" value="1"/>
</dbReference>
<dbReference type="InterPro" id="IPR005824">
    <property type="entry name" value="KOW"/>
</dbReference>
<dbReference type="InterPro" id="IPR014722">
    <property type="entry name" value="Rib_uL2_dom2"/>
</dbReference>
<dbReference type="InterPro" id="IPR003256">
    <property type="entry name" value="Ribosomal_uL24"/>
</dbReference>
<dbReference type="InterPro" id="IPR005825">
    <property type="entry name" value="Ribosomal_uL24_CS"/>
</dbReference>
<dbReference type="InterPro" id="IPR041988">
    <property type="entry name" value="Ribosomal_uL24_KOW"/>
</dbReference>
<dbReference type="InterPro" id="IPR008991">
    <property type="entry name" value="Translation_prot_SH3-like_sf"/>
</dbReference>
<dbReference type="NCBIfam" id="TIGR01079">
    <property type="entry name" value="rplX_bact"/>
    <property type="match status" value="1"/>
</dbReference>
<dbReference type="PANTHER" id="PTHR12903">
    <property type="entry name" value="MITOCHONDRIAL RIBOSOMAL PROTEIN L24"/>
    <property type="match status" value="1"/>
</dbReference>
<dbReference type="Pfam" id="PF00467">
    <property type="entry name" value="KOW"/>
    <property type="match status" value="1"/>
</dbReference>
<dbReference type="Pfam" id="PF17136">
    <property type="entry name" value="ribosomal_L24"/>
    <property type="match status" value="1"/>
</dbReference>
<dbReference type="SMART" id="SM00739">
    <property type="entry name" value="KOW"/>
    <property type="match status" value="1"/>
</dbReference>
<dbReference type="SUPFAM" id="SSF50104">
    <property type="entry name" value="Translation proteins SH3-like domain"/>
    <property type="match status" value="1"/>
</dbReference>
<dbReference type="PROSITE" id="PS01108">
    <property type="entry name" value="RIBOSOMAL_L24"/>
    <property type="match status" value="1"/>
</dbReference>
<accession>Q88XX5</accession>
<accession>F9UML6</accession>
<protein>
    <recommendedName>
        <fullName evidence="1">Large ribosomal subunit protein uL24</fullName>
    </recommendedName>
    <alternativeName>
        <fullName evidence="3">50S ribosomal protein L24</fullName>
    </alternativeName>
</protein>